<sequence length="405" mass="45069">MDHLPMPKFGPLAGLRVVFSGIEIAGPFAGQMFAEWGAEVIWIENVAWADTIRVQPNYPQLSRRNLHALSLNIFKDEGREAFLKLMETTDIFIEASKGPAFARRGITDEVLWQHNPKLVIAHLSGFGQYGTEEYTNLPAYNTIAQAFSGYLIQNGDVDQPMPAFPYTADYFSGLTATTAALAALHKARETGKGESIDIAMYEVMLRMGQYFMMDYFNGGEMCPRMTKGKDPYYAGCGLYKCADGYIVMELVGITQIEECFKDIGLAHLLGTPEIPEGTQLIHRIECPYGPLVEEKLDAWLAAHTIAEVKERFAELNIACAKVLTVPELESNPQYVARESITQWQTMDGRTCKGPNVMPKFKNNPGQIWRGMPSHGMDTAAILKNIGYSENDIQELVSKGLAKVED</sequence>
<protein>
    <recommendedName>
        <fullName evidence="1">L-carnitine CoA-transferase</fullName>
        <ecNumber evidence="1">2.8.3.21</ecNumber>
    </recommendedName>
    <alternativeName>
        <fullName evidence="1">Crotonobetainyl-CoA:carnitine CoA-transferase</fullName>
    </alternativeName>
</protein>
<proteinExistence type="inferred from homology"/>
<comment type="function">
    <text evidence="1">Catalyzes the reversible transfer of the CoA moiety from gamma-butyrobetainyl-CoA to L-carnitine to generate L-carnitinyl-CoA and gamma-butyrobetaine. Is also able to catalyze the reversible transfer of the CoA moiety from gamma-butyrobetainyl-CoA or L-carnitinyl-CoA to crotonobetaine to generate crotonobetainyl-CoA.</text>
</comment>
<comment type="catalytic activity">
    <reaction evidence="1">
        <text>crotonobetainyl-CoA + (R)-carnitine = crotonobetaine + (R)-carnitinyl-CoA</text>
        <dbReference type="Rhea" id="RHEA:28526"/>
        <dbReference type="ChEBI" id="CHEBI:16347"/>
        <dbReference type="ChEBI" id="CHEBI:17237"/>
        <dbReference type="ChEBI" id="CHEBI:60932"/>
        <dbReference type="ChEBI" id="CHEBI:60933"/>
        <dbReference type="EC" id="2.8.3.21"/>
    </reaction>
</comment>
<comment type="catalytic activity">
    <reaction evidence="1">
        <text>4-(trimethylamino)butanoyl-CoA + (R)-carnitine = (R)-carnitinyl-CoA + 4-(trimethylamino)butanoate</text>
        <dbReference type="Rhea" id="RHEA:28418"/>
        <dbReference type="ChEBI" id="CHEBI:16244"/>
        <dbReference type="ChEBI" id="CHEBI:16347"/>
        <dbReference type="ChEBI" id="CHEBI:60932"/>
        <dbReference type="ChEBI" id="CHEBI:61513"/>
        <dbReference type="EC" id="2.8.3.21"/>
    </reaction>
</comment>
<comment type="pathway">
    <text evidence="1">Amine and polyamine metabolism; carnitine metabolism.</text>
</comment>
<comment type="subunit">
    <text evidence="1">Homodimer.</text>
</comment>
<comment type="subcellular location">
    <subcellularLocation>
        <location evidence="1">Cytoplasm</location>
    </subcellularLocation>
</comment>
<comment type="similarity">
    <text evidence="1">Belongs to the CoA-transferase III family. CaiB subfamily.</text>
</comment>
<reference key="1">
    <citation type="journal article" date="2009" name="PLoS Genet.">
        <title>Organised genome dynamics in the Escherichia coli species results in highly diverse adaptive paths.</title>
        <authorList>
            <person name="Touchon M."/>
            <person name="Hoede C."/>
            <person name="Tenaillon O."/>
            <person name="Barbe V."/>
            <person name="Baeriswyl S."/>
            <person name="Bidet P."/>
            <person name="Bingen E."/>
            <person name="Bonacorsi S."/>
            <person name="Bouchier C."/>
            <person name="Bouvet O."/>
            <person name="Calteau A."/>
            <person name="Chiapello H."/>
            <person name="Clermont O."/>
            <person name="Cruveiller S."/>
            <person name="Danchin A."/>
            <person name="Diard M."/>
            <person name="Dossat C."/>
            <person name="Karoui M.E."/>
            <person name="Frapy E."/>
            <person name="Garry L."/>
            <person name="Ghigo J.M."/>
            <person name="Gilles A.M."/>
            <person name="Johnson J."/>
            <person name="Le Bouguenec C."/>
            <person name="Lescat M."/>
            <person name="Mangenot S."/>
            <person name="Martinez-Jehanne V."/>
            <person name="Matic I."/>
            <person name="Nassif X."/>
            <person name="Oztas S."/>
            <person name="Petit M.A."/>
            <person name="Pichon C."/>
            <person name="Rouy Z."/>
            <person name="Ruf C.S."/>
            <person name="Schneider D."/>
            <person name="Tourret J."/>
            <person name="Vacherie B."/>
            <person name="Vallenet D."/>
            <person name="Medigue C."/>
            <person name="Rocha E.P.C."/>
            <person name="Denamur E."/>
        </authorList>
    </citation>
    <scope>NUCLEOTIDE SEQUENCE [LARGE SCALE GENOMIC DNA]</scope>
    <source>
        <strain>UMN026 / ExPEC</strain>
    </source>
</reference>
<evidence type="ECO:0000255" key="1">
    <source>
        <dbReference type="HAMAP-Rule" id="MF_01050"/>
    </source>
</evidence>
<feature type="chain" id="PRO_1000136250" description="L-carnitine CoA-transferase">
    <location>
        <begin position="1"/>
        <end position="405"/>
    </location>
</feature>
<feature type="active site" description="Nucleophile" evidence="1">
    <location>
        <position position="169"/>
    </location>
</feature>
<feature type="binding site" evidence="1">
    <location>
        <position position="97"/>
    </location>
    <ligand>
        <name>CoA</name>
        <dbReference type="ChEBI" id="CHEBI:57287"/>
    </ligand>
</feature>
<feature type="binding site" evidence="1">
    <location>
        <position position="104"/>
    </location>
    <ligand>
        <name>CoA</name>
        <dbReference type="ChEBI" id="CHEBI:57287"/>
    </ligand>
</feature>
<accession>B7N7R3</accession>
<name>CAIB_ECOLU</name>
<organism>
    <name type="scientific">Escherichia coli O17:K52:H18 (strain UMN026 / ExPEC)</name>
    <dbReference type="NCBI Taxonomy" id="585056"/>
    <lineage>
        <taxon>Bacteria</taxon>
        <taxon>Pseudomonadati</taxon>
        <taxon>Pseudomonadota</taxon>
        <taxon>Gammaproteobacteria</taxon>
        <taxon>Enterobacterales</taxon>
        <taxon>Enterobacteriaceae</taxon>
        <taxon>Escherichia</taxon>
    </lineage>
</organism>
<keyword id="KW-0963">Cytoplasm</keyword>
<keyword id="KW-0808">Transferase</keyword>
<gene>
    <name evidence="1" type="primary">caiB</name>
    <name type="ordered locus">ECUMN_0040</name>
</gene>
<dbReference type="EC" id="2.8.3.21" evidence="1"/>
<dbReference type="EMBL" id="CU928163">
    <property type="protein sequence ID" value="CAR11263.1"/>
    <property type="molecule type" value="Genomic_DNA"/>
</dbReference>
<dbReference type="RefSeq" id="WP_000349928.1">
    <property type="nucleotide sequence ID" value="NC_011751.1"/>
</dbReference>
<dbReference type="RefSeq" id="YP_002410818.1">
    <property type="nucleotide sequence ID" value="NC_011751.1"/>
</dbReference>
<dbReference type="SMR" id="B7N7R3"/>
<dbReference type="STRING" id="585056.ECUMN_0040"/>
<dbReference type="KEGG" id="eum:ECUMN_0040"/>
<dbReference type="PATRIC" id="fig|585056.7.peg.225"/>
<dbReference type="HOGENOM" id="CLU_033975_2_0_6"/>
<dbReference type="UniPathway" id="UPA00117"/>
<dbReference type="Proteomes" id="UP000007097">
    <property type="component" value="Chromosome"/>
</dbReference>
<dbReference type="GO" id="GO:0005737">
    <property type="term" value="C:cytoplasm"/>
    <property type="evidence" value="ECO:0007669"/>
    <property type="project" value="UniProtKB-SubCell"/>
</dbReference>
<dbReference type="GO" id="GO:0008735">
    <property type="term" value="F:L-carnitine CoA-transferase activity"/>
    <property type="evidence" value="ECO:0007669"/>
    <property type="project" value="RHEA"/>
</dbReference>
<dbReference type="GO" id="GO:0009437">
    <property type="term" value="P:carnitine metabolic process"/>
    <property type="evidence" value="ECO:0007669"/>
    <property type="project" value="UniProtKB-UniRule"/>
</dbReference>
<dbReference type="FunFam" id="3.30.1540.10:FF:000001">
    <property type="entry name" value="L-carnitine CoA-transferase"/>
    <property type="match status" value="1"/>
</dbReference>
<dbReference type="Gene3D" id="3.40.50.10540">
    <property type="entry name" value="Crotonobetainyl-coa:carnitine coa-transferase, domain 1"/>
    <property type="match status" value="1"/>
</dbReference>
<dbReference type="Gene3D" id="3.30.1540.10">
    <property type="entry name" value="formyl-coa transferase, domain 3"/>
    <property type="match status" value="1"/>
</dbReference>
<dbReference type="HAMAP" id="MF_01050">
    <property type="entry name" value="CaiB"/>
    <property type="match status" value="1"/>
</dbReference>
<dbReference type="InterPro" id="IPR050509">
    <property type="entry name" value="CoA-transferase_III"/>
</dbReference>
<dbReference type="InterPro" id="IPR023452">
    <property type="entry name" value="CoA-Trfase_CaiB"/>
</dbReference>
<dbReference type="InterPro" id="IPR003673">
    <property type="entry name" value="CoA-Trfase_fam_III"/>
</dbReference>
<dbReference type="InterPro" id="IPR044855">
    <property type="entry name" value="CoA-Trfase_III_dom3_sf"/>
</dbReference>
<dbReference type="InterPro" id="IPR023606">
    <property type="entry name" value="CoA-Trfase_III_dom_1_sf"/>
</dbReference>
<dbReference type="NCBIfam" id="NF002914">
    <property type="entry name" value="PRK03525.1"/>
    <property type="match status" value="1"/>
</dbReference>
<dbReference type="PANTHER" id="PTHR48228:SF6">
    <property type="entry name" value="L-CARNITINE COA-TRANSFERASE"/>
    <property type="match status" value="1"/>
</dbReference>
<dbReference type="PANTHER" id="PTHR48228">
    <property type="entry name" value="SUCCINYL-COA--D-CITRAMALATE COA-TRANSFERASE"/>
    <property type="match status" value="1"/>
</dbReference>
<dbReference type="Pfam" id="PF02515">
    <property type="entry name" value="CoA_transf_3"/>
    <property type="match status" value="1"/>
</dbReference>
<dbReference type="SUPFAM" id="SSF89796">
    <property type="entry name" value="CoA-transferase family III (CaiB/BaiF)"/>
    <property type="match status" value="1"/>
</dbReference>